<organism>
    <name type="scientific">Chlamydomonas reinhardtii</name>
    <name type="common">Chlamydomonas smithii</name>
    <dbReference type="NCBI Taxonomy" id="3055"/>
    <lineage>
        <taxon>Eukaryota</taxon>
        <taxon>Viridiplantae</taxon>
        <taxon>Chlorophyta</taxon>
        <taxon>core chlorophytes</taxon>
        <taxon>Chlorophyceae</taxon>
        <taxon>CS clade</taxon>
        <taxon>Chlamydomonadales</taxon>
        <taxon>Chlamydomonadaceae</taxon>
        <taxon>Chlamydomonas</taxon>
    </lineage>
</organism>
<proteinExistence type="evidence at protein level"/>
<name>NU6M_CHLRE</name>
<geneLocation type="mitochondrion"/>
<comment type="function">
    <text evidence="1">Core subunit of the mitochondrial membrane respiratory chain NADH dehydrogenase (Complex I) that is believed to belong to the minimal assembly required for catalysis. Complex I functions in the transfer of electrons from NADH to the respiratory chain. The immediate electron acceptor for the enzyme is believed to be ubiquinone (By similarity).</text>
</comment>
<comment type="catalytic activity">
    <reaction>
        <text>a ubiquinone + NADH + 5 H(+)(in) = a ubiquinol + NAD(+) + 4 H(+)(out)</text>
        <dbReference type="Rhea" id="RHEA:29091"/>
        <dbReference type="Rhea" id="RHEA-COMP:9565"/>
        <dbReference type="Rhea" id="RHEA-COMP:9566"/>
        <dbReference type="ChEBI" id="CHEBI:15378"/>
        <dbReference type="ChEBI" id="CHEBI:16389"/>
        <dbReference type="ChEBI" id="CHEBI:17976"/>
        <dbReference type="ChEBI" id="CHEBI:57540"/>
        <dbReference type="ChEBI" id="CHEBI:57945"/>
        <dbReference type="EC" id="7.1.1.2"/>
    </reaction>
</comment>
<comment type="subcellular location">
    <subcellularLocation>
        <location evidence="3">Mitochondrion membrane</location>
        <topology evidence="3">Multi-pass membrane protein</topology>
    </subcellularLocation>
</comment>
<comment type="similarity">
    <text evidence="3">Belongs to the complex I subunit 6 family.</text>
</comment>
<reference key="1">
    <citation type="journal article" date="1989" name="Nucleic Acids Res.">
        <title>Nucleotide sequence of a region encoding subunit 6 of NADH dehydrogenase (ND6) and tRNA(Trp) in Chlamydomonas reinhardtii mitochondrial DNA.</title>
        <authorList>
            <person name="Boer P.H."/>
            <person name="Gray M.W."/>
        </authorList>
    </citation>
    <scope>NUCLEOTIDE SEQUENCE [GENOMIC DNA]</scope>
    <source>
        <strain>cw15</strain>
    </source>
</reference>
<reference key="2">
    <citation type="submission" date="1995-01" db="EMBL/GenBank/DDBJ databases">
        <authorList>
            <person name="Gray M.W."/>
        </authorList>
    </citation>
    <scope>NUCLEOTIDE SEQUENCE [GENOMIC DNA]</scope>
    <source>
        <strain>cw15</strain>
    </source>
</reference>
<reference key="3">
    <citation type="journal article" date="1988" name="Nucleic Acids Res.">
        <title>Nucleotide sequence of Chlamydomonas reinhardtii mitochondrial genes coding for subunit 6 of NADH dehydrogenase and tRNATrp.</title>
        <authorList>
            <person name="Ma D.-P."/>
            <person name="Yang Y.-W."/>
            <person name="Hasnain S."/>
        </authorList>
    </citation>
    <scope>NUCLEOTIDE SEQUENCE [GENOMIC DNA] OF 26-162</scope>
    <source>
        <strain>cw15</strain>
    </source>
</reference>
<accession>P10329</accession>
<keyword id="KW-0002">3D-structure</keyword>
<keyword id="KW-0249">Electron transport</keyword>
<keyword id="KW-0472">Membrane</keyword>
<keyword id="KW-0496">Mitochondrion</keyword>
<keyword id="KW-0520">NAD</keyword>
<keyword id="KW-0679">Respiratory chain</keyword>
<keyword id="KW-1278">Translocase</keyword>
<keyword id="KW-0812">Transmembrane</keyword>
<keyword id="KW-1133">Transmembrane helix</keyword>
<keyword id="KW-0813">Transport</keyword>
<keyword id="KW-0830">Ubiquinone</keyword>
<protein>
    <recommendedName>
        <fullName>NADH-ubiquinone oxidoreductase chain 6</fullName>
        <ecNumber>7.1.1.2</ecNumber>
    </recommendedName>
    <alternativeName>
        <fullName>NADH dehydrogenase subunit 6</fullName>
    </alternativeName>
</protein>
<sequence>MFFENSAILLCALLSIAVGYTKSPFMSLMYSVMLFINSSFVLMMLGFEFLALVNLLVYVGALAVLFLFVIMLLEIPATELRAYSRGWSTLGIFVFIINGVFQITPSMGPRGIITGLPGAESITNLGHALYLYFADLLILNSLVLTVALFGRFAIAPVRTTGR</sequence>
<dbReference type="EC" id="7.1.1.2"/>
<dbReference type="EMBL" id="X54860">
    <property type="protein sequence ID" value="CAA38644.1"/>
    <property type="molecule type" value="Genomic_DNA"/>
</dbReference>
<dbReference type="EMBL" id="U03843">
    <property type="protein sequence ID" value="AAB93445.1"/>
    <property type="molecule type" value="Genomic_DNA"/>
</dbReference>
<dbReference type="EMBL" id="X12939">
    <property type="protein sequence ID" value="CAA31402.1"/>
    <property type="molecule type" value="Genomic_DNA"/>
</dbReference>
<dbReference type="PIR" id="S04367">
    <property type="entry name" value="S04367"/>
</dbReference>
<dbReference type="RefSeq" id="NP_042569.1">
    <property type="nucleotide sequence ID" value="NC_001638.1"/>
</dbReference>
<dbReference type="PDB" id="9F5X">
    <property type="method" value="EM"/>
    <property type="resolution" value="2.82 A"/>
    <property type="chains" value="W=1-162"/>
</dbReference>
<dbReference type="PDB" id="9F5Y">
    <property type="method" value="EM"/>
    <property type="resolution" value="2.51 A"/>
    <property type="chains" value="W=1-162"/>
</dbReference>
<dbReference type="PDB" id="9F62">
    <property type="method" value="EM"/>
    <property type="resolution" value="5.44 A"/>
    <property type="chains" value="5W/W=1-162"/>
</dbReference>
<dbReference type="PDBsum" id="9F5X"/>
<dbReference type="PDBsum" id="9F5Y"/>
<dbReference type="PDBsum" id="9F62"/>
<dbReference type="EMDB" id="EMD-50202"/>
<dbReference type="EMDB" id="EMD-50203"/>
<dbReference type="EMDB" id="EMD-50210"/>
<dbReference type="SMR" id="P10329"/>
<dbReference type="TCDB" id="3.D.1.6.4">
    <property type="family name" value="the h+ or na+-translocating nadh dehydrogenase (ndh) family"/>
</dbReference>
<dbReference type="PaxDb" id="3055-AAB93445"/>
<dbReference type="GeneID" id="801500"/>
<dbReference type="KEGG" id="cre:ChrepMp06"/>
<dbReference type="HOGENOM" id="CLU_1637824_0_0_1"/>
<dbReference type="BioCyc" id="CHLAMY:CHREPMP06-MONOMER"/>
<dbReference type="GO" id="GO:0031966">
    <property type="term" value="C:mitochondrial membrane"/>
    <property type="evidence" value="ECO:0007669"/>
    <property type="project" value="UniProtKB-SubCell"/>
</dbReference>
<dbReference type="GO" id="GO:0008137">
    <property type="term" value="F:NADH dehydrogenase (ubiquinone) activity"/>
    <property type="evidence" value="ECO:0007669"/>
    <property type="project" value="UniProtKB-EC"/>
</dbReference>
<dbReference type="Gene3D" id="1.20.120.1200">
    <property type="entry name" value="NADH-ubiquinone/plastoquinone oxidoreductase chain 6, subunit NuoJ"/>
    <property type="match status" value="1"/>
</dbReference>
<dbReference type="InterPro" id="IPR001457">
    <property type="entry name" value="NADH_UbQ/plastoQ_OxRdtase_su6"/>
</dbReference>
<dbReference type="InterPro" id="IPR042106">
    <property type="entry name" value="Nuo/plastoQ_OxRdtase_6_NuoJ"/>
</dbReference>
<dbReference type="PANTHER" id="PTHR33269">
    <property type="entry name" value="NADH-UBIQUINONE OXIDOREDUCTASE CHAIN 6"/>
    <property type="match status" value="1"/>
</dbReference>
<dbReference type="PANTHER" id="PTHR33269:SF17">
    <property type="entry name" value="NADH-UBIQUINONE OXIDOREDUCTASE CHAIN 6"/>
    <property type="match status" value="1"/>
</dbReference>
<dbReference type="Pfam" id="PF00499">
    <property type="entry name" value="Oxidored_q3"/>
    <property type="match status" value="1"/>
</dbReference>
<feature type="chain" id="PRO_0000118267" description="NADH-ubiquinone oxidoreductase chain 6">
    <location>
        <begin position="1"/>
        <end position="162"/>
    </location>
</feature>
<feature type="transmembrane region" description="Helical" evidence="2">
    <location>
        <begin position="1"/>
        <end position="21"/>
    </location>
</feature>
<feature type="transmembrane region" description="Helical" evidence="2">
    <location>
        <begin position="32"/>
        <end position="52"/>
    </location>
</feature>
<feature type="transmembrane region" description="Helical" evidence="2">
    <location>
        <begin position="55"/>
        <end position="75"/>
    </location>
</feature>
<feature type="transmembrane region" description="Helical" evidence="2">
    <location>
        <begin position="87"/>
        <end position="107"/>
    </location>
</feature>
<feature type="transmembrane region" description="Helical" evidence="2">
    <location>
        <begin position="129"/>
        <end position="149"/>
    </location>
</feature>
<feature type="sequence conflict" description="In Ref. 3; CAA31402." evidence="3" ref="3">
    <original>RF</original>
    <variation>CA</variation>
    <location>
        <begin position="151"/>
        <end position="152"/>
    </location>
</feature>
<gene>
    <name type="primary">ND6</name>
    <name type="synonym">NAD6</name>
</gene>
<evidence type="ECO:0000250" key="1"/>
<evidence type="ECO:0000255" key="2"/>
<evidence type="ECO:0000305" key="3"/>